<protein>
    <recommendedName>
        <fullName evidence="1">Peptidase T</fullName>
        <ecNumber evidence="1">3.4.11.4</ecNumber>
    </recommendedName>
    <alternativeName>
        <fullName evidence="1">Aminotripeptidase</fullName>
        <shortName evidence="1">Tripeptidase</shortName>
    </alternativeName>
    <alternativeName>
        <fullName evidence="1">Tripeptide aminopeptidase</fullName>
    </alternativeName>
</protein>
<feature type="chain" id="PRO_0000185290" description="Peptidase T">
    <location>
        <begin position="1"/>
        <end position="409"/>
    </location>
</feature>
<feature type="active site" evidence="1">
    <location>
        <position position="82"/>
    </location>
</feature>
<feature type="active site" description="Proton acceptor" evidence="1">
    <location>
        <position position="177"/>
    </location>
</feature>
<feature type="binding site" evidence="1">
    <location>
        <position position="80"/>
    </location>
    <ligand>
        <name>Zn(2+)</name>
        <dbReference type="ChEBI" id="CHEBI:29105"/>
        <label>1</label>
    </ligand>
</feature>
<feature type="binding site" evidence="1">
    <location>
        <position position="143"/>
    </location>
    <ligand>
        <name>Zn(2+)</name>
        <dbReference type="ChEBI" id="CHEBI:29105"/>
        <label>1</label>
    </ligand>
</feature>
<feature type="binding site" evidence="1">
    <location>
        <position position="143"/>
    </location>
    <ligand>
        <name>Zn(2+)</name>
        <dbReference type="ChEBI" id="CHEBI:29105"/>
        <label>2</label>
    </ligand>
</feature>
<feature type="binding site" evidence="1">
    <location>
        <position position="178"/>
    </location>
    <ligand>
        <name>Zn(2+)</name>
        <dbReference type="ChEBI" id="CHEBI:29105"/>
        <label>2</label>
    </ligand>
</feature>
<feature type="binding site" evidence="1">
    <location>
        <position position="200"/>
    </location>
    <ligand>
        <name>Zn(2+)</name>
        <dbReference type="ChEBI" id="CHEBI:29105"/>
        <label>1</label>
    </ligand>
</feature>
<feature type="binding site" evidence="1">
    <location>
        <position position="382"/>
    </location>
    <ligand>
        <name>Zn(2+)</name>
        <dbReference type="ChEBI" id="CHEBI:29105"/>
        <label>2</label>
    </ligand>
</feature>
<evidence type="ECO:0000255" key="1">
    <source>
        <dbReference type="HAMAP-Rule" id="MF_00550"/>
    </source>
</evidence>
<name>PEPT_ENTFA</name>
<gene>
    <name evidence="1" type="primary">pepT</name>
    <name type="synonym">pepT-1</name>
    <name type="ordered locus">EF_1382</name>
</gene>
<organism>
    <name type="scientific">Enterococcus faecalis (strain ATCC 700802 / V583)</name>
    <dbReference type="NCBI Taxonomy" id="226185"/>
    <lineage>
        <taxon>Bacteria</taxon>
        <taxon>Bacillati</taxon>
        <taxon>Bacillota</taxon>
        <taxon>Bacilli</taxon>
        <taxon>Lactobacillales</taxon>
        <taxon>Enterococcaceae</taxon>
        <taxon>Enterococcus</taxon>
    </lineage>
</organism>
<reference key="1">
    <citation type="journal article" date="2003" name="Science">
        <title>Role of mobile DNA in the evolution of vancomycin-resistant Enterococcus faecalis.</title>
        <authorList>
            <person name="Paulsen I.T."/>
            <person name="Banerjei L."/>
            <person name="Myers G.S.A."/>
            <person name="Nelson K.E."/>
            <person name="Seshadri R."/>
            <person name="Read T.D."/>
            <person name="Fouts D.E."/>
            <person name="Eisen J.A."/>
            <person name="Gill S.R."/>
            <person name="Heidelberg J.F."/>
            <person name="Tettelin H."/>
            <person name="Dodson R.J."/>
            <person name="Umayam L.A."/>
            <person name="Brinkac L.M."/>
            <person name="Beanan M.J."/>
            <person name="Daugherty S.C."/>
            <person name="DeBoy R.T."/>
            <person name="Durkin S.A."/>
            <person name="Kolonay J.F."/>
            <person name="Madupu R."/>
            <person name="Nelson W.C."/>
            <person name="Vamathevan J.J."/>
            <person name="Tran B."/>
            <person name="Upton J."/>
            <person name="Hansen T."/>
            <person name="Shetty J."/>
            <person name="Khouri H.M."/>
            <person name="Utterback T.R."/>
            <person name="Radune D."/>
            <person name="Ketchum K.A."/>
            <person name="Dougherty B.A."/>
            <person name="Fraser C.M."/>
        </authorList>
    </citation>
    <scope>NUCLEOTIDE SEQUENCE [LARGE SCALE GENOMIC DNA]</scope>
    <source>
        <strain>ATCC 700802 / V583</strain>
    </source>
</reference>
<accession>Q835J5</accession>
<keyword id="KW-0031">Aminopeptidase</keyword>
<keyword id="KW-0963">Cytoplasm</keyword>
<keyword id="KW-0378">Hydrolase</keyword>
<keyword id="KW-0479">Metal-binding</keyword>
<keyword id="KW-0482">Metalloprotease</keyword>
<keyword id="KW-0645">Protease</keyword>
<keyword id="KW-1185">Reference proteome</keyword>
<keyword id="KW-0862">Zinc</keyword>
<dbReference type="EC" id="3.4.11.4" evidence="1"/>
<dbReference type="EMBL" id="AE016830">
    <property type="protein sequence ID" value="AAO81173.1"/>
    <property type="molecule type" value="Genomic_DNA"/>
</dbReference>
<dbReference type="RefSeq" id="NP_815103.1">
    <property type="nucleotide sequence ID" value="NC_004668.1"/>
</dbReference>
<dbReference type="RefSeq" id="WP_002360428.1">
    <property type="nucleotide sequence ID" value="NZ_KE136528.1"/>
</dbReference>
<dbReference type="SMR" id="Q835J5"/>
<dbReference type="STRING" id="226185.EF_1382"/>
<dbReference type="MEROPS" id="M20.003"/>
<dbReference type="EnsemblBacteria" id="AAO81173">
    <property type="protein sequence ID" value="AAO81173"/>
    <property type="gene ID" value="EF_1382"/>
</dbReference>
<dbReference type="KEGG" id="efa:EF1382"/>
<dbReference type="PATRIC" id="fig|226185.45.peg.2118"/>
<dbReference type="eggNOG" id="COG2195">
    <property type="taxonomic scope" value="Bacteria"/>
</dbReference>
<dbReference type="HOGENOM" id="CLU_053676_0_0_9"/>
<dbReference type="Proteomes" id="UP000001415">
    <property type="component" value="Chromosome"/>
</dbReference>
<dbReference type="GO" id="GO:0005829">
    <property type="term" value="C:cytosol"/>
    <property type="evidence" value="ECO:0007669"/>
    <property type="project" value="TreeGrafter"/>
</dbReference>
<dbReference type="GO" id="GO:0008237">
    <property type="term" value="F:metallopeptidase activity"/>
    <property type="evidence" value="ECO:0007669"/>
    <property type="project" value="UniProtKB-KW"/>
</dbReference>
<dbReference type="GO" id="GO:0045148">
    <property type="term" value="F:tripeptide aminopeptidase activity"/>
    <property type="evidence" value="ECO:0007669"/>
    <property type="project" value="UniProtKB-UniRule"/>
</dbReference>
<dbReference type="GO" id="GO:0008270">
    <property type="term" value="F:zinc ion binding"/>
    <property type="evidence" value="ECO:0007669"/>
    <property type="project" value="UniProtKB-UniRule"/>
</dbReference>
<dbReference type="GO" id="GO:0043171">
    <property type="term" value="P:peptide catabolic process"/>
    <property type="evidence" value="ECO:0007669"/>
    <property type="project" value="UniProtKB-UniRule"/>
</dbReference>
<dbReference type="GO" id="GO:0006508">
    <property type="term" value="P:proteolysis"/>
    <property type="evidence" value="ECO:0007669"/>
    <property type="project" value="UniProtKB-UniRule"/>
</dbReference>
<dbReference type="CDD" id="cd03892">
    <property type="entry name" value="M20_peptT"/>
    <property type="match status" value="1"/>
</dbReference>
<dbReference type="FunFam" id="3.30.70.360:FF:000002">
    <property type="entry name" value="Peptidase T"/>
    <property type="match status" value="1"/>
</dbReference>
<dbReference type="Gene3D" id="3.30.70.360">
    <property type="match status" value="1"/>
</dbReference>
<dbReference type="Gene3D" id="3.40.630.10">
    <property type="entry name" value="Zn peptidases"/>
    <property type="match status" value="1"/>
</dbReference>
<dbReference type="HAMAP" id="MF_00550">
    <property type="entry name" value="Aminopeptidase_M20"/>
    <property type="match status" value="1"/>
</dbReference>
<dbReference type="InterPro" id="IPR001261">
    <property type="entry name" value="ArgE/DapE_CS"/>
</dbReference>
<dbReference type="InterPro" id="IPR036264">
    <property type="entry name" value="Bact_exopeptidase_dim_dom"/>
</dbReference>
<dbReference type="InterPro" id="IPR002933">
    <property type="entry name" value="Peptidase_M20"/>
</dbReference>
<dbReference type="InterPro" id="IPR011650">
    <property type="entry name" value="Peptidase_M20_dimer"/>
</dbReference>
<dbReference type="InterPro" id="IPR010161">
    <property type="entry name" value="Peptidase_M20B"/>
</dbReference>
<dbReference type="NCBIfam" id="TIGR01882">
    <property type="entry name" value="peptidase-T"/>
    <property type="match status" value="1"/>
</dbReference>
<dbReference type="NCBIfam" id="NF003976">
    <property type="entry name" value="PRK05469.1"/>
    <property type="match status" value="1"/>
</dbReference>
<dbReference type="NCBIfam" id="NF009920">
    <property type="entry name" value="PRK13381.1"/>
    <property type="match status" value="1"/>
</dbReference>
<dbReference type="PANTHER" id="PTHR42994">
    <property type="entry name" value="PEPTIDASE T"/>
    <property type="match status" value="1"/>
</dbReference>
<dbReference type="PANTHER" id="PTHR42994:SF1">
    <property type="entry name" value="PEPTIDASE T"/>
    <property type="match status" value="1"/>
</dbReference>
<dbReference type="Pfam" id="PF07687">
    <property type="entry name" value="M20_dimer"/>
    <property type="match status" value="1"/>
</dbReference>
<dbReference type="Pfam" id="PF01546">
    <property type="entry name" value="Peptidase_M20"/>
    <property type="match status" value="1"/>
</dbReference>
<dbReference type="PIRSF" id="PIRSF037215">
    <property type="entry name" value="Peptidase_M20B"/>
    <property type="match status" value="1"/>
</dbReference>
<dbReference type="SUPFAM" id="SSF55031">
    <property type="entry name" value="Bacterial exopeptidase dimerisation domain"/>
    <property type="match status" value="1"/>
</dbReference>
<dbReference type="SUPFAM" id="SSF53187">
    <property type="entry name" value="Zn-dependent exopeptidases"/>
    <property type="match status" value="1"/>
</dbReference>
<dbReference type="PROSITE" id="PS00758">
    <property type="entry name" value="ARGE_DAPE_CPG2_1"/>
    <property type="match status" value="1"/>
</dbReference>
<dbReference type="PROSITE" id="PS00759">
    <property type="entry name" value="ARGE_DAPE_CPG2_2"/>
    <property type="match status" value="1"/>
</dbReference>
<sequence length="409" mass="45400">MYENLLPRFLRYVKTETRSDATSTTTPSTQTQVAFAQTLKKELEELGMSDVIYNETNGFVIATLPSNVEKDVRSIGFIAHMDTADFNAVNVSPQIVENYDGESTIPLDKEGKFTLNTKDFPNLKNYRGETLITTDGTTLLGADDKSGIAEIMTAMEYLINHPEIKHGTIRVAFGPDEEIGVGADKFDVAQFNVDFAYTMDGGPVGELQFETFNAAQAEITIQGKNVHPGTAKNTMINALQLGIDFHNALPADEVPEKTAGEEGFYHLAAFAGTPEEATMTYIIRDHNREIFEARKAKIKEIQQTLNAPFDEERIKVDLFDQYYNMREVIEKDMSIVEIAKQAMEELSIQPIIEPVRGGTDGSKISYLGIPTPNIFAGGENMHGRFEFVSLQAMEKATNVIIKIAELNAK</sequence>
<comment type="function">
    <text evidence="1">Cleaves the N-terminal amino acid of tripeptides.</text>
</comment>
<comment type="catalytic activity">
    <reaction evidence="1">
        <text>Release of the N-terminal residue from a tripeptide.</text>
        <dbReference type="EC" id="3.4.11.4"/>
    </reaction>
</comment>
<comment type="cofactor">
    <cofactor evidence="1">
        <name>Zn(2+)</name>
        <dbReference type="ChEBI" id="CHEBI:29105"/>
    </cofactor>
    <text evidence="1">Binds 2 Zn(2+) ions per subunit.</text>
</comment>
<comment type="subcellular location">
    <subcellularLocation>
        <location evidence="1">Cytoplasm</location>
    </subcellularLocation>
</comment>
<comment type="similarity">
    <text evidence="1">Belongs to the peptidase M20B family.</text>
</comment>
<proteinExistence type="inferred from homology"/>